<name>LIPB_MYCMM</name>
<accession>B2HHL3</accession>
<gene>
    <name evidence="1" type="primary">lipB</name>
    <name type="ordered locus">MMAR_3285</name>
</gene>
<sequence length="241" mass="25111">MTGSIRSSTAGIDVRQLGSVDYQTAWQMQRDLADARVAGGPDTLLLLQHPAVYTAGRRTEPHERPGPVFAGAAGAEAIDVVDTDRGGKITWHGPGQLVGYPIIGLAQPLDVVNYVRRLEESLIKVCLDLGLETGRVEGRSGVWIPAGSGRPERKIAAIGVRVSRATTLHGFALNCDCDLAAFTAIVPCGISDAGVTSLSAELGRTVGVEEVRGAVADAVCNALDGALPVRDHPGARVASST</sequence>
<keyword id="KW-0012">Acyltransferase</keyword>
<keyword id="KW-0963">Cytoplasm</keyword>
<keyword id="KW-1185">Reference proteome</keyword>
<keyword id="KW-0808">Transferase</keyword>
<organism>
    <name type="scientific">Mycobacterium marinum (strain ATCC BAA-535 / M)</name>
    <dbReference type="NCBI Taxonomy" id="216594"/>
    <lineage>
        <taxon>Bacteria</taxon>
        <taxon>Bacillati</taxon>
        <taxon>Actinomycetota</taxon>
        <taxon>Actinomycetes</taxon>
        <taxon>Mycobacteriales</taxon>
        <taxon>Mycobacteriaceae</taxon>
        <taxon>Mycobacterium</taxon>
        <taxon>Mycobacterium ulcerans group</taxon>
    </lineage>
</organism>
<evidence type="ECO:0000255" key="1">
    <source>
        <dbReference type="HAMAP-Rule" id="MF_00013"/>
    </source>
</evidence>
<evidence type="ECO:0000255" key="2">
    <source>
        <dbReference type="PROSITE-ProRule" id="PRU01067"/>
    </source>
</evidence>
<feature type="chain" id="PRO_1000089464" description="Octanoyltransferase">
    <location>
        <begin position="1"/>
        <end position="241"/>
    </location>
</feature>
<feature type="domain" description="BPL/LPL catalytic" evidence="2">
    <location>
        <begin position="38"/>
        <end position="227"/>
    </location>
</feature>
<feature type="active site" description="Acyl-thioester intermediate" evidence="1">
    <location>
        <position position="188"/>
    </location>
</feature>
<feature type="binding site" evidence="1">
    <location>
        <begin position="85"/>
        <end position="92"/>
    </location>
    <ligand>
        <name>substrate</name>
    </ligand>
</feature>
<feature type="binding site" evidence="1">
    <location>
        <begin position="157"/>
        <end position="159"/>
    </location>
    <ligand>
        <name>substrate</name>
    </ligand>
</feature>
<feature type="binding site" evidence="1">
    <location>
        <begin position="170"/>
        <end position="172"/>
    </location>
    <ligand>
        <name>substrate</name>
    </ligand>
</feature>
<feature type="site" description="Lowers pKa of active site Cys" evidence="1">
    <location>
        <position position="154"/>
    </location>
</feature>
<dbReference type="EC" id="2.3.1.181" evidence="1"/>
<dbReference type="EMBL" id="CP000854">
    <property type="protein sequence ID" value="ACC41711.1"/>
    <property type="molecule type" value="Genomic_DNA"/>
</dbReference>
<dbReference type="RefSeq" id="WP_012394941.1">
    <property type="nucleotide sequence ID" value="NC_010612.1"/>
</dbReference>
<dbReference type="SMR" id="B2HHL3"/>
<dbReference type="STRING" id="216594.MMAR_3285"/>
<dbReference type="KEGG" id="mmi:MMAR_3285"/>
<dbReference type="eggNOG" id="COG0321">
    <property type="taxonomic scope" value="Bacteria"/>
</dbReference>
<dbReference type="HOGENOM" id="CLU_035168_2_1_11"/>
<dbReference type="OrthoDB" id="9787061at2"/>
<dbReference type="UniPathway" id="UPA00538">
    <property type="reaction ID" value="UER00592"/>
</dbReference>
<dbReference type="Proteomes" id="UP000001190">
    <property type="component" value="Chromosome"/>
</dbReference>
<dbReference type="GO" id="GO:0005737">
    <property type="term" value="C:cytoplasm"/>
    <property type="evidence" value="ECO:0007669"/>
    <property type="project" value="UniProtKB-SubCell"/>
</dbReference>
<dbReference type="GO" id="GO:0033819">
    <property type="term" value="F:lipoyl(octanoyl) transferase activity"/>
    <property type="evidence" value="ECO:0007669"/>
    <property type="project" value="UniProtKB-EC"/>
</dbReference>
<dbReference type="GO" id="GO:0036211">
    <property type="term" value="P:protein modification process"/>
    <property type="evidence" value="ECO:0007669"/>
    <property type="project" value="InterPro"/>
</dbReference>
<dbReference type="CDD" id="cd16444">
    <property type="entry name" value="LipB"/>
    <property type="match status" value="1"/>
</dbReference>
<dbReference type="FunFam" id="3.30.930.10:FF:000035">
    <property type="entry name" value="Putative lipoyltransferase 2, mitochondrial"/>
    <property type="match status" value="1"/>
</dbReference>
<dbReference type="Gene3D" id="3.30.930.10">
    <property type="entry name" value="Bira Bifunctional Protein, Domain 2"/>
    <property type="match status" value="1"/>
</dbReference>
<dbReference type="HAMAP" id="MF_00013">
    <property type="entry name" value="LipB"/>
    <property type="match status" value="1"/>
</dbReference>
<dbReference type="InterPro" id="IPR045864">
    <property type="entry name" value="aa-tRNA-synth_II/BPL/LPL"/>
</dbReference>
<dbReference type="InterPro" id="IPR004143">
    <property type="entry name" value="BPL_LPL_catalytic"/>
</dbReference>
<dbReference type="InterPro" id="IPR000544">
    <property type="entry name" value="Octanoyltransferase"/>
</dbReference>
<dbReference type="InterPro" id="IPR020605">
    <property type="entry name" value="Octanoyltransferase_CS"/>
</dbReference>
<dbReference type="NCBIfam" id="TIGR00214">
    <property type="entry name" value="lipB"/>
    <property type="match status" value="1"/>
</dbReference>
<dbReference type="NCBIfam" id="NF010925">
    <property type="entry name" value="PRK14345.1"/>
    <property type="match status" value="1"/>
</dbReference>
<dbReference type="PANTHER" id="PTHR10993:SF7">
    <property type="entry name" value="LIPOYLTRANSFERASE 2, MITOCHONDRIAL-RELATED"/>
    <property type="match status" value="1"/>
</dbReference>
<dbReference type="PANTHER" id="PTHR10993">
    <property type="entry name" value="OCTANOYLTRANSFERASE"/>
    <property type="match status" value="1"/>
</dbReference>
<dbReference type="Pfam" id="PF21948">
    <property type="entry name" value="LplA-B_cat"/>
    <property type="match status" value="1"/>
</dbReference>
<dbReference type="PIRSF" id="PIRSF016262">
    <property type="entry name" value="LPLase"/>
    <property type="match status" value="1"/>
</dbReference>
<dbReference type="SUPFAM" id="SSF55681">
    <property type="entry name" value="Class II aaRS and biotin synthetases"/>
    <property type="match status" value="1"/>
</dbReference>
<dbReference type="PROSITE" id="PS51733">
    <property type="entry name" value="BPL_LPL_CATALYTIC"/>
    <property type="match status" value="1"/>
</dbReference>
<dbReference type="PROSITE" id="PS01313">
    <property type="entry name" value="LIPB"/>
    <property type="match status" value="1"/>
</dbReference>
<protein>
    <recommendedName>
        <fullName evidence="1">Octanoyltransferase</fullName>
        <ecNumber evidence="1">2.3.1.181</ecNumber>
    </recommendedName>
    <alternativeName>
        <fullName evidence="1">Lipoate-protein ligase B</fullName>
    </alternativeName>
    <alternativeName>
        <fullName evidence="1">Lipoyl/octanoyl transferase</fullName>
    </alternativeName>
    <alternativeName>
        <fullName evidence="1">Octanoyl-[acyl-carrier-protein]-protein N-octanoyltransferase</fullName>
    </alternativeName>
</protein>
<reference key="1">
    <citation type="journal article" date="2008" name="Genome Res.">
        <title>Insights from the complete genome sequence of Mycobacterium marinum on the evolution of Mycobacterium tuberculosis.</title>
        <authorList>
            <person name="Stinear T.P."/>
            <person name="Seemann T."/>
            <person name="Harrison P.F."/>
            <person name="Jenkin G.A."/>
            <person name="Davies J.K."/>
            <person name="Johnson P.D."/>
            <person name="Abdellah Z."/>
            <person name="Arrowsmith C."/>
            <person name="Chillingworth T."/>
            <person name="Churcher C."/>
            <person name="Clarke K."/>
            <person name="Cronin A."/>
            <person name="Davis P."/>
            <person name="Goodhead I."/>
            <person name="Holroyd N."/>
            <person name="Jagels K."/>
            <person name="Lord A."/>
            <person name="Moule S."/>
            <person name="Mungall K."/>
            <person name="Norbertczak H."/>
            <person name="Quail M.A."/>
            <person name="Rabbinowitsch E."/>
            <person name="Walker D."/>
            <person name="White B."/>
            <person name="Whitehead S."/>
            <person name="Small P.L."/>
            <person name="Brosch R."/>
            <person name="Ramakrishnan L."/>
            <person name="Fischbach M.A."/>
            <person name="Parkhill J."/>
            <person name="Cole S.T."/>
        </authorList>
    </citation>
    <scope>NUCLEOTIDE SEQUENCE [LARGE SCALE GENOMIC DNA]</scope>
    <source>
        <strain>ATCC BAA-535 / M</strain>
    </source>
</reference>
<comment type="function">
    <text evidence="1">Catalyzes the transfer of endogenously produced octanoic acid from octanoyl-acyl-carrier-protein onto the lipoyl domains of lipoate-dependent enzymes. Lipoyl-ACP can also act as a substrate although octanoyl-ACP is likely to be the physiological substrate.</text>
</comment>
<comment type="catalytic activity">
    <reaction evidence="1">
        <text>octanoyl-[ACP] + L-lysyl-[protein] = N(6)-octanoyl-L-lysyl-[protein] + holo-[ACP] + H(+)</text>
        <dbReference type="Rhea" id="RHEA:17665"/>
        <dbReference type="Rhea" id="RHEA-COMP:9636"/>
        <dbReference type="Rhea" id="RHEA-COMP:9685"/>
        <dbReference type="Rhea" id="RHEA-COMP:9752"/>
        <dbReference type="Rhea" id="RHEA-COMP:9928"/>
        <dbReference type="ChEBI" id="CHEBI:15378"/>
        <dbReference type="ChEBI" id="CHEBI:29969"/>
        <dbReference type="ChEBI" id="CHEBI:64479"/>
        <dbReference type="ChEBI" id="CHEBI:78463"/>
        <dbReference type="ChEBI" id="CHEBI:78809"/>
        <dbReference type="EC" id="2.3.1.181"/>
    </reaction>
</comment>
<comment type="pathway">
    <text evidence="1">Protein modification; protein lipoylation via endogenous pathway; protein N(6)-(lipoyl)lysine from octanoyl-[acyl-carrier-protein]: step 1/2.</text>
</comment>
<comment type="subcellular location">
    <subcellularLocation>
        <location evidence="1">Cytoplasm</location>
    </subcellularLocation>
</comment>
<comment type="miscellaneous">
    <text evidence="1">In the reaction, the free carboxyl group of octanoic acid is attached via an amide linkage to the epsilon-amino group of a specific lysine residue of lipoyl domains of lipoate-dependent enzymes.</text>
</comment>
<comment type="similarity">
    <text evidence="1">Belongs to the LipB family.</text>
</comment>
<proteinExistence type="inferred from homology"/>